<comment type="function">
    <text>May be involved in transcriptional regulation.</text>
</comment>
<comment type="interaction">
    <interactant intactId="EBI-714987">
        <id>Q9Y3M9</id>
    </interactant>
    <interactant intactId="EBI-739580">
        <id>Q13137</id>
        <label>CALCOCO2</label>
    </interactant>
    <organismsDiffer>false</organismsDiffer>
    <experiments>3</experiments>
</comment>
<comment type="interaction">
    <interactant intactId="EBI-714987">
        <id>Q9Y3M9</id>
    </interactant>
    <interactant intactId="EBI-11977221">
        <id>Q86Z20</id>
        <label>CCDC125</label>
    </interactant>
    <organismsDiffer>false</organismsDiffer>
    <experiments>3</experiments>
</comment>
<comment type="interaction">
    <interactant intactId="EBI-714987">
        <id>Q9Y3M9</id>
    </interactant>
    <interactant intactId="EBI-744239">
        <id>Q14749</id>
        <label>GNMT</label>
    </interactant>
    <organismsDiffer>false</organismsDiffer>
    <experiments>3</experiments>
</comment>
<comment type="interaction">
    <interactant intactId="EBI-714987">
        <id>Q9Y3M9</id>
    </interactant>
    <interactant intactId="EBI-2549423">
        <id>Q6NT76</id>
        <label>HMBOX1</label>
    </interactant>
    <organismsDiffer>false</organismsDiffer>
    <experiments>3</experiments>
</comment>
<comment type="interaction">
    <interactant intactId="EBI-714987">
        <id>Q9Y3M9</id>
    </interactant>
    <interactant intactId="EBI-10171697">
        <id>Q6A162</id>
        <label>KRT40</label>
    </interactant>
    <organismsDiffer>false</organismsDiffer>
    <experiments>3</experiments>
</comment>
<comment type="interaction">
    <interactant intactId="EBI-714987">
        <id>Q9Y3M9</id>
    </interactant>
    <interactant intactId="EBI-10172290">
        <id>P60409</id>
        <label>KRTAP10-7</label>
    </interactant>
    <organismsDiffer>false</organismsDiffer>
    <experiments>3</experiments>
</comment>
<comment type="interaction">
    <interactant intactId="EBI-714987">
        <id>Q9Y3M9</id>
    </interactant>
    <interactant intactId="EBI-742948">
        <id>Q5JR59</id>
        <label>MTUS2</label>
    </interactant>
    <organismsDiffer>false</organismsDiffer>
    <experiments>3</experiments>
</comment>
<comment type="interaction">
    <interactant intactId="EBI-714987">
        <id>Q9Y3M9</id>
    </interactant>
    <interactant intactId="EBI-1050213">
        <id>Q96KN7</id>
        <label>RPGRIP1</label>
    </interactant>
    <organismsDiffer>false</organismsDiffer>
    <experiments>3</experiments>
</comment>
<comment type="subcellular location">
    <subcellularLocation>
        <location evidence="5">Nucleus</location>
    </subcellularLocation>
</comment>
<comment type="alternative products">
    <event type="alternative splicing"/>
    <isoform>
        <id>Q9Y3M9-1</id>
        <name>1</name>
        <sequence type="displayed"/>
    </isoform>
    <isoform>
        <id>Q9Y3M9-2</id>
        <name>2</name>
        <sequence type="described" ref="VSP_055949"/>
    </isoform>
</comment>
<comment type="similarity">
    <text evidence="5">Belongs to the krueppel C2H2-type zinc-finger protein family.</text>
</comment>
<keyword id="KW-0025">Alternative splicing</keyword>
<keyword id="KW-0238">DNA-binding</keyword>
<keyword id="KW-1017">Isopeptide bond</keyword>
<keyword id="KW-0479">Metal-binding</keyword>
<keyword id="KW-0539">Nucleus</keyword>
<keyword id="KW-1267">Proteomics identification</keyword>
<keyword id="KW-1185">Reference proteome</keyword>
<keyword id="KW-0677">Repeat</keyword>
<keyword id="KW-0804">Transcription</keyword>
<keyword id="KW-0805">Transcription regulation</keyword>
<keyword id="KW-0832">Ubl conjugation</keyword>
<keyword id="KW-0862">Zinc</keyword>
<keyword id="KW-0863">Zinc-finger</keyword>
<evidence type="ECO:0000255" key="1">
    <source>
        <dbReference type="PROSITE-ProRule" id="PRU00042"/>
    </source>
</evidence>
<evidence type="ECO:0000255" key="2">
    <source>
        <dbReference type="PROSITE-ProRule" id="PRU00119"/>
    </source>
</evidence>
<evidence type="ECO:0000256" key="3">
    <source>
        <dbReference type="SAM" id="MobiDB-lite"/>
    </source>
</evidence>
<evidence type="ECO:0000303" key="4">
    <source>
    </source>
</evidence>
<evidence type="ECO:0000305" key="5"/>
<evidence type="ECO:0007744" key="6">
    <source>
    </source>
</evidence>
<evidence type="ECO:0007744" key="7">
    <source>
    </source>
</evidence>
<feature type="chain" id="PRO_0000047540" description="Zinc finger protein 337">
    <location>
        <begin position="1"/>
        <end position="751"/>
    </location>
</feature>
<feature type="domain" description="KRAB" evidence="2">
    <location>
        <begin position="12"/>
        <end position="83"/>
    </location>
</feature>
<feature type="zinc finger region" description="C2H2-type 1; degenerate" evidence="1">
    <location>
        <begin position="180"/>
        <end position="202"/>
    </location>
</feature>
<feature type="zinc finger region" description="C2H2-type 2" evidence="1">
    <location>
        <begin position="208"/>
        <end position="230"/>
    </location>
</feature>
<feature type="zinc finger region" description="C2H2-type 3" evidence="1">
    <location>
        <begin position="236"/>
        <end position="258"/>
    </location>
</feature>
<feature type="zinc finger region" description="C2H2-type 4" evidence="1">
    <location>
        <begin position="264"/>
        <end position="286"/>
    </location>
</feature>
<feature type="zinc finger region" description="C2H2-type 5" evidence="1">
    <location>
        <begin position="292"/>
        <end position="314"/>
    </location>
</feature>
<feature type="zinc finger region" description="C2H2-type 6" evidence="1">
    <location>
        <begin position="320"/>
        <end position="342"/>
    </location>
</feature>
<feature type="zinc finger region" description="C2H2-type 7" evidence="1">
    <location>
        <begin position="348"/>
        <end position="370"/>
    </location>
</feature>
<feature type="zinc finger region" description="C2H2-type 8" evidence="1">
    <location>
        <begin position="376"/>
        <end position="398"/>
    </location>
</feature>
<feature type="zinc finger region" description="C2H2-type 9" evidence="1">
    <location>
        <begin position="404"/>
        <end position="426"/>
    </location>
</feature>
<feature type="zinc finger region" description="C2H2-type 10" evidence="1">
    <location>
        <begin position="432"/>
        <end position="454"/>
    </location>
</feature>
<feature type="zinc finger region" description="C2H2-type 11" evidence="1">
    <location>
        <begin position="460"/>
        <end position="482"/>
    </location>
</feature>
<feature type="zinc finger region" description="C2H2-type 12" evidence="1">
    <location>
        <begin position="488"/>
        <end position="510"/>
    </location>
</feature>
<feature type="zinc finger region" description="C2H2-type 13" evidence="1">
    <location>
        <begin position="516"/>
        <end position="538"/>
    </location>
</feature>
<feature type="zinc finger region" description="C2H2-type 14" evidence="1">
    <location>
        <begin position="544"/>
        <end position="566"/>
    </location>
</feature>
<feature type="zinc finger region" description="C2H2-type 15" evidence="1">
    <location>
        <begin position="572"/>
        <end position="594"/>
    </location>
</feature>
<feature type="zinc finger region" description="C2H2-type 16" evidence="1">
    <location>
        <begin position="600"/>
        <end position="622"/>
    </location>
</feature>
<feature type="zinc finger region" description="C2H2-type 17" evidence="1">
    <location>
        <begin position="628"/>
        <end position="650"/>
    </location>
</feature>
<feature type="zinc finger region" description="C2H2-type 18" evidence="1">
    <location>
        <begin position="656"/>
        <end position="679"/>
    </location>
</feature>
<feature type="zinc finger region" description="C2H2-type 19" evidence="1">
    <location>
        <begin position="685"/>
        <end position="707"/>
    </location>
</feature>
<feature type="zinc finger region" description="C2H2-type 20" evidence="1">
    <location>
        <begin position="713"/>
        <end position="735"/>
    </location>
</feature>
<feature type="region of interest" description="Disordered" evidence="3">
    <location>
        <begin position="101"/>
        <end position="163"/>
    </location>
</feature>
<feature type="compositionally biased region" description="Low complexity" evidence="3">
    <location>
        <begin position="101"/>
        <end position="116"/>
    </location>
</feature>
<feature type="cross-link" description="Glycyl lysine isopeptide (Lys-Gly) (interchain with G-Cter in SUMO2)" evidence="6 7">
    <location>
        <position position="458"/>
    </location>
</feature>
<feature type="splice variant" id="VSP_055949" description="In isoform 2." evidence="4">
    <location>
        <begin position="52"/>
        <end position="83"/>
    </location>
</feature>
<feature type="sequence variant" id="VAR_024213" description="In dbSNP:rs926487.">
    <original>V</original>
    <variation>I</variation>
    <location>
        <position position="17"/>
    </location>
</feature>
<feature type="sequence variant" id="VAR_052814" description="In dbSNP:rs16987972.">
    <original>R</original>
    <variation>G</variation>
    <location>
        <position position="467"/>
    </location>
</feature>
<feature type="sequence conflict" description="In Ref. 4; CAB43216." evidence="5" ref="4">
    <original>T</original>
    <variation>A</variation>
    <location>
        <position position="476"/>
    </location>
</feature>
<feature type="sequence conflict" description="In Ref. 4; CAB43216." evidence="5" ref="4">
    <original>E</original>
    <variation>V</variation>
    <location>
        <position position="653"/>
    </location>
</feature>
<organism>
    <name type="scientific">Homo sapiens</name>
    <name type="common">Human</name>
    <dbReference type="NCBI Taxonomy" id="9606"/>
    <lineage>
        <taxon>Eukaryota</taxon>
        <taxon>Metazoa</taxon>
        <taxon>Chordata</taxon>
        <taxon>Craniata</taxon>
        <taxon>Vertebrata</taxon>
        <taxon>Euteleostomi</taxon>
        <taxon>Mammalia</taxon>
        <taxon>Eutheria</taxon>
        <taxon>Euarchontoglires</taxon>
        <taxon>Primates</taxon>
        <taxon>Haplorrhini</taxon>
        <taxon>Catarrhini</taxon>
        <taxon>Hominidae</taxon>
        <taxon>Homo</taxon>
    </lineage>
</organism>
<sequence length="751" mass="86875">MGPQGARRQAFLAFGDVTVDFTQKEWRLLSPAQRALYREVTLENYSHLVSLGILHSKPELIRRLEQGEVPWGEERRRRPGPCAGIYAEHVLRPKNLGLAHQRQQQLQFSDQSFQSDTAEGQEKEKSTKPMAFSSPPLRHAVSSRRRNSVVEIESSQGQRENPTEIDKVLKGIENSRWGAFKCAERGQDFSRKMMVIIHKKAHSRQKLFTCRECHQGFRDESALLLHQNTHTGEKSYVCSVCGRGFSLKANLLRHQRTHSGEKPFLCKVCGRGYTSKSYLTVHERTHTGEKPYECQECGRRFNDKSSYNKHLKAHSGEKPFVCKECGRGYTNKSYFVVHKRIHSGEKPYRCQECGRGFSNKSHLITHQRTHSGEKPFACRQCKQSFSVKGSLLRHQRTHSGEKPFVCKDCERSFSQKSTLVYHQRTHSGEKPFVCRECGQGFIQKSTLVKHQITHSEEKPFVCKDCGRGFIQKSTFTLHQRTHSEEKPYGCRECGRRFRDKSSYNKHLRAHLGEKRFFCRDCGRGFTLKPNLTIHQRTHSGEKPFMCKQCEKSFSLKANLLRHQWTHSGERPFNCKDCGRGFILKSTLLFHQKTHSGEKPFICSECGQGFIWKSNLVKHQLAHSGKQPFVCKECGRGFNWKGNLLTHQRTHSGEKPFVCNVCGQGFSWKRSLTRHHWRIHSKEKPFVCQECKRGYTSKSDLTVHERIHTGERPYECQECGRKFSNKSYYSKHLKRHLREKRFCTGSVGEASS</sequence>
<dbReference type="EMBL" id="AK299811">
    <property type="protein sequence ID" value="BAG61684.1"/>
    <property type="molecule type" value="mRNA"/>
</dbReference>
<dbReference type="EMBL" id="AL031673">
    <property type="status" value="NOT_ANNOTATED_CDS"/>
    <property type="molecule type" value="Genomic_DNA"/>
</dbReference>
<dbReference type="EMBL" id="BC021298">
    <property type="protein sequence ID" value="AAH21298.1"/>
    <property type="molecule type" value="mRNA"/>
</dbReference>
<dbReference type="EMBL" id="AL049942">
    <property type="protein sequence ID" value="CAB43216.1"/>
    <property type="molecule type" value="mRNA"/>
</dbReference>
<dbReference type="CCDS" id="CCDS13174.1">
    <molecule id="Q9Y3M9-1"/>
</dbReference>
<dbReference type="PIR" id="T08674">
    <property type="entry name" value="T08674"/>
</dbReference>
<dbReference type="RefSeq" id="NP_001277190.1">
    <molecule id="Q9Y3M9-1"/>
    <property type="nucleotide sequence ID" value="NM_001290261.2"/>
</dbReference>
<dbReference type="RefSeq" id="NP_056470.1">
    <molecule id="Q9Y3M9-1"/>
    <property type="nucleotide sequence ID" value="NM_015655.4"/>
</dbReference>
<dbReference type="RefSeq" id="XP_005260759.1">
    <molecule id="Q9Y3M9-2"/>
    <property type="nucleotide sequence ID" value="XM_005260702.4"/>
</dbReference>
<dbReference type="RefSeq" id="XP_006723621.1">
    <molecule id="Q9Y3M9-1"/>
    <property type="nucleotide sequence ID" value="XM_006723558.5"/>
</dbReference>
<dbReference type="RefSeq" id="XP_011527521.1">
    <molecule id="Q9Y3M9-1"/>
    <property type="nucleotide sequence ID" value="XM_011529219.3"/>
</dbReference>
<dbReference type="RefSeq" id="XP_016883291.1">
    <property type="nucleotide sequence ID" value="XM_017027802.1"/>
</dbReference>
<dbReference type="RefSeq" id="XP_016883292.1">
    <molecule id="Q9Y3M9-2"/>
    <property type="nucleotide sequence ID" value="XM_017027803.3"/>
</dbReference>
<dbReference type="RefSeq" id="XP_054179321.1">
    <molecule id="Q9Y3M9-1"/>
    <property type="nucleotide sequence ID" value="XM_054323346.1"/>
</dbReference>
<dbReference type="RefSeq" id="XP_054179322.1">
    <molecule id="Q9Y3M9-1"/>
    <property type="nucleotide sequence ID" value="XM_054323347.1"/>
</dbReference>
<dbReference type="RefSeq" id="XP_054179323.1">
    <molecule id="Q9Y3M9-2"/>
    <property type="nucleotide sequence ID" value="XM_054323348.1"/>
</dbReference>
<dbReference type="RefSeq" id="XP_054179324.1">
    <molecule id="Q9Y3M9-2"/>
    <property type="nucleotide sequence ID" value="XM_054323349.1"/>
</dbReference>
<dbReference type="SMR" id="Q9Y3M9"/>
<dbReference type="BioGRID" id="117583">
    <property type="interactions" value="15"/>
</dbReference>
<dbReference type="FunCoup" id="Q9Y3M9">
    <property type="interactions" value="6"/>
</dbReference>
<dbReference type="IntAct" id="Q9Y3M9">
    <property type="interactions" value="22"/>
</dbReference>
<dbReference type="MINT" id="Q9Y3M9"/>
<dbReference type="STRING" id="9606.ENSP00000252979"/>
<dbReference type="iPTMnet" id="Q9Y3M9"/>
<dbReference type="PhosphoSitePlus" id="Q9Y3M9"/>
<dbReference type="SwissPalm" id="Q9Y3M9"/>
<dbReference type="BioMuta" id="ZNF337"/>
<dbReference type="DMDM" id="20141069"/>
<dbReference type="jPOST" id="Q9Y3M9"/>
<dbReference type="MassIVE" id="Q9Y3M9"/>
<dbReference type="PaxDb" id="9606-ENSP00000365619"/>
<dbReference type="PeptideAtlas" id="Q9Y3M9"/>
<dbReference type="ProteomicsDB" id="5036"/>
<dbReference type="ProteomicsDB" id="86050">
    <molecule id="Q9Y3M9-1"/>
</dbReference>
<dbReference type="Pumba" id="Q9Y3M9"/>
<dbReference type="Antibodypedia" id="10099">
    <property type="antibodies" value="138 antibodies from 23 providers"/>
</dbReference>
<dbReference type="DNASU" id="26152"/>
<dbReference type="Ensembl" id="ENST00000252979.6">
    <molecule id="Q9Y3M9-1"/>
    <property type="protein sequence ID" value="ENSP00000252979.5"/>
    <property type="gene ID" value="ENSG00000130684.14"/>
</dbReference>
<dbReference type="Ensembl" id="ENST00000376436.5">
    <molecule id="Q9Y3M9-1"/>
    <property type="protein sequence ID" value="ENSP00000365619.1"/>
    <property type="gene ID" value="ENSG00000130684.14"/>
</dbReference>
<dbReference type="GeneID" id="26152"/>
<dbReference type="KEGG" id="hsa:26152"/>
<dbReference type="MANE-Select" id="ENST00000252979.6">
    <property type="protein sequence ID" value="ENSP00000252979.5"/>
    <property type="RefSeq nucleotide sequence ID" value="NM_015655.4"/>
    <property type="RefSeq protein sequence ID" value="NP_056470.1"/>
</dbReference>
<dbReference type="UCSC" id="uc002wva.4">
    <molecule id="Q9Y3M9-1"/>
    <property type="organism name" value="human"/>
</dbReference>
<dbReference type="AGR" id="HGNC:15809"/>
<dbReference type="CTD" id="26152"/>
<dbReference type="DisGeNET" id="26152"/>
<dbReference type="GeneCards" id="ZNF337"/>
<dbReference type="HGNC" id="HGNC:15809">
    <property type="gene designation" value="ZNF337"/>
</dbReference>
<dbReference type="HPA" id="ENSG00000130684">
    <property type="expression patterns" value="Tissue enhanced (brain)"/>
</dbReference>
<dbReference type="neXtProt" id="NX_Q9Y3M9"/>
<dbReference type="OpenTargets" id="ENSG00000130684"/>
<dbReference type="PharmGKB" id="PA38043"/>
<dbReference type="VEuPathDB" id="HostDB:ENSG00000130684"/>
<dbReference type="eggNOG" id="KOG1721">
    <property type="taxonomic scope" value="Eukaryota"/>
</dbReference>
<dbReference type="GeneTree" id="ENSGT00940000164820"/>
<dbReference type="HOGENOM" id="CLU_002678_44_5_1"/>
<dbReference type="InParanoid" id="Q9Y3M9"/>
<dbReference type="OMA" id="KTVMGPQ"/>
<dbReference type="OrthoDB" id="6591996at2759"/>
<dbReference type="PAN-GO" id="Q9Y3M9">
    <property type="GO annotations" value="3 GO annotations based on evolutionary models"/>
</dbReference>
<dbReference type="PhylomeDB" id="Q9Y3M9"/>
<dbReference type="TreeFam" id="TF343410"/>
<dbReference type="PathwayCommons" id="Q9Y3M9"/>
<dbReference type="Reactome" id="R-HSA-212436">
    <property type="pathway name" value="Generic Transcription Pathway"/>
</dbReference>
<dbReference type="SignaLink" id="Q9Y3M9"/>
<dbReference type="BioGRID-ORCS" id="26152">
    <property type="hits" value="7 hits in 1177 CRISPR screens"/>
</dbReference>
<dbReference type="ChiTaRS" id="ZNF337">
    <property type="organism name" value="human"/>
</dbReference>
<dbReference type="GenomeRNAi" id="26152"/>
<dbReference type="Pharos" id="Q9Y3M9">
    <property type="development level" value="Tdark"/>
</dbReference>
<dbReference type="PRO" id="PR:Q9Y3M9"/>
<dbReference type="Proteomes" id="UP000005640">
    <property type="component" value="Chromosome 20"/>
</dbReference>
<dbReference type="RNAct" id="Q9Y3M9">
    <property type="molecule type" value="protein"/>
</dbReference>
<dbReference type="Bgee" id="ENSG00000130684">
    <property type="expression patterns" value="Expressed in cerebellar hemisphere and 205 other cell types or tissues"/>
</dbReference>
<dbReference type="GO" id="GO:0005634">
    <property type="term" value="C:nucleus"/>
    <property type="evidence" value="ECO:0000318"/>
    <property type="project" value="GO_Central"/>
</dbReference>
<dbReference type="GO" id="GO:0000981">
    <property type="term" value="F:DNA-binding transcription factor activity, RNA polymerase II-specific"/>
    <property type="evidence" value="ECO:0000318"/>
    <property type="project" value="GO_Central"/>
</dbReference>
<dbReference type="GO" id="GO:0000977">
    <property type="term" value="F:RNA polymerase II transcription regulatory region sequence-specific DNA binding"/>
    <property type="evidence" value="ECO:0000318"/>
    <property type="project" value="GO_Central"/>
</dbReference>
<dbReference type="GO" id="GO:0008270">
    <property type="term" value="F:zinc ion binding"/>
    <property type="evidence" value="ECO:0007669"/>
    <property type="project" value="UniProtKB-KW"/>
</dbReference>
<dbReference type="GO" id="GO:0006357">
    <property type="term" value="P:regulation of transcription by RNA polymerase II"/>
    <property type="evidence" value="ECO:0000318"/>
    <property type="project" value="GO_Central"/>
</dbReference>
<dbReference type="CDD" id="cd07765">
    <property type="entry name" value="KRAB_A-box"/>
    <property type="match status" value="1"/>
</dbReference>
<dbReference type="FunFam" id="3.30.160.60:FF:001576">
    <property type="entry name" value="HKR1, GLI-Kruppel zinc finger family member"/>
    <property type="match status" value="1"/>
</dbReference>
<dbReference type="FunFam" id="3.30.160.60:FF:001480">
    <property type="entry name" value="Si:cabz01071911.3"/>
    <property type="match status" value="1"/>
</dbReference>
<dbReference type="FunFam" id="3.30.160.60:FF:001235">
    <property type="entry name" value="Si:ch211-119o8.6"/>
    <property type="match status" value="1"/>
</dbReference>
<dbReference type="FunFam" id="3.30.160.60:FF:000478">
    <property type="entry name" value="Zinc finger protein 133"/>
    <property type="match status" value="3"/>
</dbReference>
<dbReference type="FunFam" id="3.30.160.60:FF:000155">
    <property type="entry name" value="zinc finger protein 133 isoform X1"/>
    <property type="match status" value="3"/>
</dbReference>
<dbReference type="FunFam" id="3.30.160.60:FF:000189">
    <property type="entry name" value="zinc finger protein 133 isoform X1"/>
    <property type="match status" value="2"/>
</dbReference>
<dbReference type="FunFam" id="3.30.160.60:FF:002716">
    <property type="entry name" value="Zinc finger protein 212"/>
    <property type="match status" value="1"/>
</dbReference>
<dbReference type="FunFam" id="3.30.160.60:FF:002608">
    <property type="entry name" value="Zinc finger protein 337"/>
    <property type="match status" value="1"/>
</dbReference>
<dbReference type="FunFam" id="3.30.160.60:FF:002644">
    <property type="entry name" value="Zinc finger protein 337"/>
    <property type="match status" value="1"/>
</dbReference>
<dbReference type="FunFam" id="3.30.160.60:FF:003295">
    <property type="entry name" value="Zinc finger protein 337"/>
    <property type="match status" value="1"/>
</dbReference>
<dbReference type="FunFam" id="3.30.160.60:FF:002343">
    <property type="entry name" value="Zinc finger protein 33A"/>
    <property type="match status" value="3"/>
</dbReference>
<dbReference type="FunFam" id="3.30.160.60:FF:000912">
    <property type="entry name" value="Zinc finger protein 660"/>
    <property type="match status" value="1"/>
</dbReference>
<dbReference type="Gene3D" id="6.10.140.140">
    <property type="match status" value="1"/>
</dbReference>
<dbReference type="Gene3D" id="3.30.160.60">
    <property type="entry name" value="Classic Zinc Finger"/>
    <property type="match status" value="19"/>
</dbReference>
<dbReference type="InterPro" id="IPR001909">
    <property type="entry name" value="KRAB"/>
</dbReference>
<dbReference type="InterPro" id="IPR036051">
    <property type="entry name" value="KRAB_dom_sf"/>
</dbReference>
<dbReference type="InterPro" id="IPR050758">
    <property type="entry name" value="Znf_C2H2-type"/>
</dbReference>
<dbReference type="InterPro" id="IPR036236">
    <property type="entry name" value="Znf_C2H2_sf"/>
</dbReference>
<dbReference type="InterPro" id="IPR013087">
    <property type="entry name" value="Znf_C2H2_type"/>
</dbReference>
<dbReference type="PANTHER" id="PTHR23234:SF8">
    <property type="entry name" value="C2H2-TYPE DOMAIN-CONTAINING PROTEIN"/>
    <property type="match status" value="1"/>
</dbReference>
<dbReference type="PANTHER" id="PTHR23234">
    <property type="entry name" value="ZNF44 PROTEIN"/>
    <property type="match status" value="1"/>
</dbReference>
<dbReference type="Pfam" id="PF01352">
    <property type="entry name" value="KRAB"/>
    <property type="match status" value="1"/>
</dbReference>
<dbReference type="Pfam" id="PF00096">
    <property type="entry name" value="zf-C2H2"/>
    <property type="match status" value="16"/>
</dbReference>
<dbReference type="SMART" id="SM00349">
    <property type="entry name" value="KRAB"/>
    <property type="match status" value="1"/>
</dbReference>
<dbReference type="SMART" id="SM00355">
    <property type="entry name" value="ZnF_C2H2"/>
    <property type="match status" value="20"/>
</dbReference>
<dbReference type="SUPFAM" id="SSF57667">
    <property type="entry name" value="beta-beta-alpha zinc fingers"/>
    <property type="match status" value="12"/>
</dbReference>
<dbReference type="SUPFAM" id="SSF109640">
    <property type="entry name" value="KRAB domain (Kruppel-associated box)"/>
    <property type="match status" value="1"/>
</dbReference>
<dbReference type="PROSITE" id="PS50805">
    <property type="entry name" value="KRAB"/>
    <property type="match status" value="1"/>
</dbReference>
<dbReference type="PROSITE" id="PS00028">
    <property type="entry name" value="ZINC_FINGER_C2H2_1"/>
    <property type="match status" value="19"/>
</dbReference>
<dbReference type="PROSITE" id="PS50157">
    <property type="entry name" value="ZINC_FINGER_C2H2_2"/>
    <property type="match status" value="20"/>
</dbReference>
<name>ZN337_HUMAN</name>
<gene>
    <name type="primary">ZNF337</name>
</gene>
<protein>
    <recommendedName>
        <fullName>Zinc finger protein 337</fullName>
    </recommendedName>
</protein>
<reference key="1">
    <citation type="journal article" date="2004" name="Nat. Genet.">
        <title>Complete sequencing and characterization of 21,243 full-length human cDNAs.</title>
        <authorList>
            <person name="Ota T."/>
            <person name="Suzuki Y."/>
            <person name="Nishikawa T."/>
            <person name="Otsuki T."/>
            <person name="Sugiyama T."/>
            <person name="Irie R."/>
            <person name="Wakamatsu A."/>
            <person name="Hayashi K."/>
            <person name="Sato H."/>
            <person name="Nagai K."/>
            <person name="Kimura K."/>
            <person name="Makita H."/>
            <person name="Sekine M."/>
            <person name="Obayashi M."/>
            <person name="Nishi T."/>
            <person name="Shibahara T."/>
            <person name="Tanaka T."/>
            <person name="Ishii S."/>
            <person name="Yamamoto J."/>
            <person name="Saito K."/>
            <person name="Kawai Y."/>
            <person name="Isono Y."/>
            <person name="Nakamura Y."/>
            <person name="Nagahari K."/>
            <person name="Murakami K."/>
            <person name="Yasuda T."/>
            <person name="Iwayanagi T."/>
            <person name="Wagatsuma M."/>
            <person name="Shiratori A."/>
            <person name="Sudo H."/>
            <person name="Hosoiri T."/>
            <person name="Kaku Y."/>
            <person name="Kodaira H."/>
            <person name="Kondo H."/>
            <person name="Sugawara M."/>
            <person name="Takahashi M."/>
            <person name="Kanda K."/>
            <person name="Yokoi T."/>
            <person name="Furuya T."/>
            <person name="Kikkawa E."/>
            <person name="Omura Y."/>
            <person name="Abe K."/>
            <person name="Kamihara K."/>
            <person name="Katsuta N."/>
            <person name="Sato K."/>
            <person name="Tanikawa M."/>
            <person name="Yamazaki M."/>
            <person name="Ninomiya K."/>
            <person name="Ishibashi T."/>
            <person name="Yamashita H."/>
            <person name="Murakawa K."/>
            <person name="Fujimori K."/>
            <person name="Tanai H."/>
            <person name="Kimata M."/>
            <person name="Watanabe M."/>
            <person name="Hiraoka S."/>
            <person name="Chiba Y."/>
            <person name="Ishida S."/>
            <person name="Ono Y."/>
            <person name="Takiguchi S."/>
            <person name="Watanabe S."/>
            <person name="Yosida M."/>
            <person name="Hotuta T."/>
            <person name="Kusano J."/>
            <person name="Kanehori K."/>
            <person name="Takahashi-Fujii A."/>
            <person name="Hara H."/>
            <person name="Tanase T.-O."/>
            <person name="Nomura Y."/>
            <person name="Togiya S."/>
            <person name="Komai F."/>
            <person name="Hara R."/>
            <person name="Takeuchi K."/>
            <person name="Arita M."/>
            <person name="Imose N."/>
            <person name="Musashino K."/>
            <person name="Yuuki H."/>
            <person name="Oshima A."/>
            <person name="Sasaki N."/>
            <person name="Aotsuka S."/>
            <person name="Yoshikawa Y."/>
            <person name="Matsunawa H."/>
            <person name="Ichihara T."/>
            <person name="Shiohata N."/>
            <person name="Sano S."/>
            <person name="Moriya S."/>
            <person name="Momiyama H."/>
            <person name="Satoh N."/>
            <person name="Takami S."/>
            <person name="Terashima Y."/>
            <person name="Suzuki O."/>
            <person name="Nakagawa S."/>
            <person name="Senoh A."/>
            <person name="Mizoguchi H."/>
            <person name="Goto Y."/>
            <person name="Shimizu F."/>
            <person name="Wakebe H."/>
            <person name="Hishigaki H."/>
            <person name="Watanabe T."/>
            <person name="Sugiyama A."/>
            <person name="Takemoto M."/>
            <person name="Kawakami B."/>
            <person name="Yamazaki M."/>
            <person name="Watanabe K."/>
            <person name="Kumagai A."/>
            <person name="Itakura S."/>
            <person name="Fukuzumi Y."/>
            <person name="Fujimori Y."/>
            <person name="Komiyama M."/>
            <person name="Tashiro H."/>
            <person name="Tanigami A."/>
            <person name="Fujiwara T."/>
            <person name="Ono T."/>
            <person name="Yamada K."/>
            <person name="Fujii Y."/>
            <person name="Ozaki K."/>
            <person name="Hirao M."/>
            <person name="Ohmori Y."/>
            <person name="Kawabata A."/>
            <person name="Hikiji T."/>
            <person name="Kobatake N."/>
            <person name="Inagaki H."/>
            <person name="Ikema Y."/>
            <person name="Okamoto S."/>
            <person name="Okitani R."/>
            <person name="Kawakami T."/>
            <person name="Noguchi S."/>
            <person name="Itoh T."/>
            <person name="Shigeta K."/>
            <person name="Senba T."/>
            <person name="Matsumura K."/>
            <person name="Nakajima Y."/>
            <person name="Mizuno T."/>
            <person name="Morinaga M."/>
            <person name="Sasaki M."/>
            <person name="Togashi T."/>
            <person name="Oyama M."/>
            <person name="Hata H."/>
            <person name="Watanabe M."/>
            <person name="Komatsu T."/>
            <person name="Mizushima-Sugano J."/>
            <person name="Satoh T."/>
            <person name="Shirai Y."/>
            <person name="Takahashi Y."/>
            <person name="Nakagawa K."/>
            <person name="Okumura K."/>
            <person name="Nagase T."/>
            <person name="Nomura N."/>
            <person name="Kikuchi H."/>
            <person name="Masuho Y."/>
            <person name="Yamashita R."/>
            <person name="Nakai K."/>
            <person name="Yada T."/>
            <person name="Nakamura Y."/>
            <person name="Ohara O."/>
            <person name="Isogai T."/>
            <person name="Sugano S."/>
        </authorList>
    </citation>
    <scope>NUCLEOTIDE SEQUENCE [LARGE SCALE MRNA] (ISOFORM 2)</scope>
    <source>
        <tissue>Brain</tissue>
    </source>
</reference>
<reference key="2">
    <citation type="journal article" date="2001" name="Nature">
        <title>The DNA sequence and comparative analysis of human chromosome 20.</title>
        <authorList>
            <person name="Deloukas P."/>
            <person name="Matthews L.H."/>
            <person name="Ashurst J.L."/>
            <person name="Burton J."/>
            <person name="Gilbert J.G.R."/>
            <person name="Jones M."/>
            <person name="Stavrides G."/>
            <person name="Almeida J.P."/>
            <person name="Babbage A.K."/>
            <person name="Bagguley C.L."/>
            <person name="Bailey J."/>
            <person name="Barlow K.F."/>
            <person name="Bates K.N."/>
            <person name="Beard L.M."/>
            <person name="Beare D.M."/>
            <person name="Beasley O.P."/>
            <person name="Bird C.P."/>
            <person name="Blakey S.E."/>
            <person name="Bridgeman A.M."/>
            <person name="Brown A.J."/>
            <person name="Buck D."/>
            <person name="Burrill W.D."/>
            <person name="Butler A.P."/>
            <person name="Carder C."/>
            <person name="Carter N.P."/>
            <person name="Chapman J.C."/>
            <person name="Clamp M."/>
            <person name="Clark G."/>
            <person name="Clark L.N."/>
            <person name="Clark S.Y."/>
            <person name="Clee C.M."/>
            <person name="Clegg S."/>
            <person name="Cobley V.E."/>
            <person name="Collier R.E."/>
            <person name="Connor R.E."/>
            <person name="Corby N.R."/>
            <person name="Coulson A."/>
            <person name="Coville G.J."/>
            <person name="Deadman R."/>
            <person name="Dhami P.D."/>
            <person name="Dunn M."/>
            <person name="Ellington A.G."/>
            <person name="Frankland J.A."/>
            <person name="Fraser A."/>
            <person name="French L."/>
            <person name="Garner P."/>
            <person name="Grafham D.V."/>
            <person name="Griffiths C."/>
            <person name="Griffiths M.N.D."/>
            <person name="Gwilliam R."/>
            <person name="Hall R.E."/>
            <person name="Hammond S."/>
            <person name="Harley J.L."/>
            <person name="Heath P.D."/>
            <person name="Ho S."/>
            <person name="Holden J.L."/>
            <person name="Howden P.J."/>
            <person name="Huckle E."/>
            <person name="Hunt A.R."/>
            <person name="Hunt S.E."/>
            <person name="Jekosch K."/>
            <person name="Johnson C.M."/>
            <person name="Johnson D."/>
            <person name="Kay M.P."/>
            <person name="Kimberley A.M."/>
            <person name="King A."/>
            <person name="Knights A."/>
            <person name="Laird G.K."/>
            <person name="Lawlor S."/>
            <person name="Lehvaeslaiho M.H."/>
            <person name="Leversha M.A."/>
            <person name="Lloyd C."/>
            <person name="Lloyd D.M."/>
            <person name="Lovell J.D."/>
            <person name="Marsh V.L."/>
            <person name="Martin S.L."/>
            <person name="McConnachie L.J."/>
            <person name="McLay K."/>
            <person name="McMurray A.A."/>
            <person name="Milne S.A."/>
            <person name="Mistry D."/>
            <person name="Moore M.J.F."/>
            <person name="Mullikin J.C."/>
            <person name="Nickerson T."/>
            <person name="Oliver K."/>
            <person name="Parker A."/>
            <person name="Patel R."/>
            <person name="Pearce T.A.V."/>
            <person name="Peck A.I."/>
            <person name="Phillimore B.J.C.T."/>
            <person name="Prathalingam S.R."/>
            <person name="Plumb R.W."/>
            <person name="Ramsay H."/>
            <person name="Rice C.M."/>
            <person name="Ross M.T."/>
            <person name="Scott C.E."/>
            <person name="Sehra H.K."/>
            <person name="Shownkeen R."/>
            <person name="Sims S."/>
            <person name="Skuce C.D."/>
            <person name="Smith M.L."/>
            <person name="Soderlund C."/>
            <person name="Steward C.A."/>
            <person name="Sulston J.E."/>
            <person name="Swann R.M."/>
            <person name="Sycamore N."/>
            <person name="Taylor R."/>
            <person name="Tee L."/>
            <person name="Thomas D.W."/>
            <person name="Thorpe A."/>
            <person name="Tracey A."/>
            <person name="Tromans A.C."/>
            <person name="Vaudin M."/>
            <person name="Wall M."/>
            <person name="Wallis J.M."/>
            <person name="Whitehead S.L."/>
            <person name="Whittaker P."/>
            <person name="Willey D.L."/>
            <person name="Williams L."/>
            <person name="Williams S.A."/>
            <person name="Wilming L."/>
            <person name="Wray P.W."/>
            <person name="Hubbard T."/>
            <person name="Durbin R.M."/>
            <person name="Bentley D.R."/>
            <person name="Beck S."/>
            <person name="Rogers J."/>
        </authorList>
    </citation>
    <scope>NUCLEOTIDE SEQUENCE [LARGE SCALE GENOMIC DNA]</scope>
</reference>
<reference key="3">
    <citation type="journal article" date="2004" name="Genome Res.">
        <title>The status, quality, and expansion of the NIH full-length cDNA project: the Mammalian Gene Collection (MGC).</title>
        <authorList>
            <consortium name="The MGC Project Team"/>
        </authorList>
    </citation>
    <scope>NUCLEOTIDE SEQUENCE [LARGE SCALE MRNA] (ISOFORM 1)</scope>
    <source>
        <tissue>Lung</tissue>
    </source>
</reference>
<reference key="4">
    <citation type="journal article" date="2007" name="BMC Genomics">
        <title>The full-ORF clone resource of the German cDNA consortium.</title>
        <authorList>
            <person name="Bechtel S."/>
            <person name="Rosenfelder H."/>
            <person name="Duda A."/>
            <person name="Schmidt C.P."/>
            <person name="Ernst U."/>
            <person name="Wellenreuther R."/>
            <person name="Mehrle A."/>
            <person name="Schuster C."/>
            <person name="Bahr A."/>
            <person name="Bloecker H."/>
            <person name="Heubner D."/>
            <person name="Hoerlein A."/>
            <person name="Michel G."/>
            <person name="Wedler H."/>
            <person name="Koehrer K."/>
            <person name="Ottenwaelder B."/>
            <person name="Poustka A."/>
            <person name="Wiemann S."/>
            <person name="Schupp I."/>
        </authorList>
    </citation>
    <scope>NUCLEOTIDE SEQUENCE [LARGE SCALE MRNA] OF 256-751 (ISOFORM 1)</scope>
    <source>
        <tissue>Brain</tissue>
    </source>
</reference>
<reference key="5">
    <citation type="journal article" date="2015" name="Mol. Cell. Proteomics">
        <title>System-wide analysis of SUMOylation dynamics in response to replication stress reveals novel small ubiquitin-like modified target proteins and acceptor lysines relevant for genome stability.</title>
        <authorList>
            <person name="Xiao Z."/>
            <person name="Chang J.G."/>
            <person name="Hendriks I.A."/>
            <person name="Sigurdsson J.O."/>
            <person name="Olsen J.V."/>
            <person name="Vertegaal A.C."/>
        </authorList>
    </citation>
    <scope>SUMOYLATION [LARGE SCALE ANALYSIS] AT LYS-458</scope>
    <scope>IDENTIFICATION BY MASS SPECTROMETRY [LARGE SCALE ANALYSIS]</scope>
</reference>
<reference key="6">
    <citation type="journal article" date="2017" name="Nat. Struct. Mol. Biol.">
        <title>Site-specific mapping of the human SUMO proteome reveals co-modification with phosphorylation.</title>
        <authorList>
            <person name="Hendriks I.A."/>
            <person name="Lyon D."/>
            <person name="Young C."/>
            <person name="Jensen L.J."/>
            <person name="Vertegaal A.C."/>
            <person name="Nielsen M.L."/>
        </authorList>
    </citation>
    <scope>SUMOYLATION [LARGE SCALE ANALYSIS] AT LYS-458</scope>
    <scope>IDENTIFICATION BY MASS SPECTROMETRY [LARGE SCALE ANALYSIS]</scope>
</reference>
<proteinExistence type="evidence at protein level"/>
<accession>Q9Y3M9</accession>
<accession>B4DSM2</accession>
<accession>Q9Y3Y5</accession>